<dbReference type="EMBL" id="AK002442">
    <property type="protein sequence ID" value="BAB22104.1"/>
    <property type="molecule type" value="mRNA"/>
</dbReference>
<dbReference type="EMBL" id="AK010421">
    <property type="protein sequence ID" value="BAB26924.2"/>
    <property type="molecule type" value="mRNA"/>
</dbReference>
<dbReference type="EMBL" id="AK029446">
    <property type="protein sequence ID" value="BAC26453.1"/>
    <property type="molecule type" value="mRNA"/>
</dbReference>
<dbReference type="EMBL" id="AL683894">
    <property type="status" value="NOT_ANNOTATED_CDS"/>
    <property type="molecule type" value="Genomic_DNA"/>
</dbReference>
<dbReference type="EMBL" id="BC025158">
    <property type="protein sequence ID" value="AAH25158.1"/>
    <property type="molecule type" value="mRNA"/>
</dbReference>
<dbReference type="EMBL" id="BC096046">
    <property type="protein sequence ID" value="AAH96046.1"/>
    <property type="molecule type" value="mRNA"/>
</dbReference>
<dbReference type="EMBL" id="BR000693">
    <property type="protein sequence ID" value="FAA00418.1"/>
    <property type="molecule type" value="mRNA"/>
</dbReference>
<dbReference type="CCDS" id="CCDS17992.1"/>
<dbReference type="RefSeq" id="NP_079752.3">
    <property type="nucleotide sequence ID" value="NM_025476.6"/>
</dbReference>
<dbReference type="SMR" id="Q9DCV4"/>
<dbReference type="BioGRID" id="211369">
    <property type="interactions" value="2"/>
</dbReference>
<dbReference type="FunCoup" id="Q9DCV4">
    <property type="interactions" value="2162"/>
</dbReference>
<dbReference type="STRING" id="10090.ENSMUSP00000029888"/>
<dbReference type="GlyGen" id="Q9DCV4">
    <property type="glycosylation" value="1 site, 1 O-linked glycan (1 site)"/>
</dbReference>
<dbReference type="iPTMnet" id="Q9DCV4"/>
<dbReference type="PhosphoSitePlus" id="Q9DCV4"/>
<dbReference type="SwissPalm" id="Q9DCV4"/>
<dbReference type="jPOST" id="Q9DCV4"/>
<dbReference type="PaxDb" id="10090-ENSMUSP00000029888"/>
<dbReference type="PeptideAtlas" id="Q9DCV4"/>
<dbReference type="ProteomicsDB" id="299834"/>
<dbReference type="Pumba" id="Q9DCV4"/>
<dbReference type="Antibodypedia" id="12639">
    <property type="antibodies" value="130 antibodies from 18 providers"/>
</dbReference>
<dbReference type="DNASU" id="66302"/>
<dbReference type="Ensembl" id="ENSMUST00000029888.4">
    <property type="protein sequence ID" value="ENSMUSP00000029888.4"/>
    <property type="gene ID" value="ENSMUSG00000028229.12"/>
</dbReference>
<dbReference type="GeneID" id="66302"/>
<dbReference type="KEGG" id="mmu:66302"/>
<dbReference type="UCSC" id="uc008sca.3">
    <property type="organism name" value="mouse"/>
</dbReference>
<dbReference type="AGR" id="MGI:1913552"/>
<dbReference type="CTD" id="51115"/>
<dbReference type="MGI" id="MGI:1913552">
    <property type="gene designation" value="Rmdn1"/>
</dbReference>
<dbReference type="VEuPathDB" id="HostDB:ENSMUSG00000028229"/>
<dbReference type="eggNOG" id="ENOG502QSJV">
    <property type="taxonomic scope" value="Eukaryota"/>
</dbReference>
<dbReference type="GeneTree" id="ENSGT00950000182992"/>
<dbReference type="HOGENOM" id="CLU_046369_1_1_1"/>
<dbReference type="InParanoid" id="Q9DCV4"/>
<dbReference type="OMA" id="KDVEILW"/>
<dbReference type="OrthoDB" id="69711at2759"/>
<dbReference type="PhylomeDB" id="Q9DCV4"/>
<dbReference type="TreeFam" id="TF315854"/>
<dbReference type="BioGRID-ORCS" id="66302">
    <property type="hits" value="2 hits in 77 CRISPR screens"/>
</dbReference>
<dbReference type="PRO" id="PR:Q9DCV4"/>
<dbReference type="Proteomes" id="UP000000589">
    <property type="component" value="Chromosome 4"/>
</dbReference>
<dbReference type="RNAct" id="Q9DCV4">
    <property type="molecule type" value="protein"/>
</dbReference>
<dbReference type="Bgee" id="ENSMUSG00000028229">
    <property type="expression patterns" value="Expressed in interventricular septum and 241 other cell types or tissues"/>
</dbReference>
<dbReference type="ExpressionAtlas" id="Q9DCV4">
    <property type="expression patterns" value="baseline and differential"/>
</dbReference>
<dbReference type="GO" id="GO:0005739">
    <property type="term" value="C:mitochondrion"/>
    <property type="evidence" value="ECO:0007005"/>
    <property type="project" value="MGI"/>
</dbReference>
<dbReference type="GO" id="GO:0097431">
    <property type="term" value="C:mitotic spindle pole"/>
    <property type="evidence" value="ECO:0007669"/>
    <property type="project" value="Ensembl"/>
</dbReference>
<dbReference type="GO" id="GO:0005876">
    <property type="term" value="C:spindle microtubule"/>
    <property type="evidence" value="ECO:0007669"/>
    <property type="project" value="Ensembl"/>
</dbReference>
<dbReference type="GO" id="GO:0008017">
    <property type="term" value="F:microtubule binding"/>
    <property type="evidence" value="ECO:0007669"/>
    <property type="project" value="Ensembl"/>
</dbReference>
<dbReference type="FunFam" id="1.25.40.10:FF:002154">
    <property type="entry name" value="regulator of microtubule dynamics protein 1"/>
    <property type="match status" value="1"/>
</dbReference>
<dbReference type="Gene3D" id="1.25.40.10">
    <property type="entry name" value="Tetratricopeptide repeat domain"/>
    <property type="match status" value="1"/>
</dbReference>
<dbReference type="InterPro" id="IPR049039">
    <property type="entry name" value="RMD1-3_a_helical_rpt"/>
</dbReference>
<dbReference type="InterPro" id="IPR011990">
    <property type="entry name" value="TPR-like_helical_dom_sf"/>
</dbReference>
<dbReference type="PANTHER" id="PTHR16056">
    <property type="entry name" value="REGULATOR OF MICROTUBULE DYNAMICS PROTEIN"/>
    <property type="match status" value="1"/>
</dbReference>
<dbReference type="PANTHER" id="PTHR16056:SF16">
    <property type="entry name" value="REGULATOR OF MICROTUBULE DYNAMICS PROTEIN 1"/>
    <property type="match status" value="1"/>
</dbReference>
<dbReference type="Pfam" id="PF21033">
    <property type="entry name" value="RMD1-3"/>
    <property type="match status" value="1"/>
</dbReference>
<dbReference type="SUPFAM" id="SSF48452">
    <property type="entry name" value="TPR-like"/>
    <property type="match status" value="1"/>
</dbReference>
<evidence type="ECO:0000250" key="1"/>
<evidence type="ECO:0000305" key="2"/>
<evidence type="ECO:0007744" key="3">
    <source>
    </source>
</evidence>
<comment type="subunit">
    <text evidence="1">Interacts with microtubules.</text>
</comment>
<comment type="subcellular location">
    <subcellularLocation>
        <location evidence="1">Cytoplasm</location>
    </subcellularLocation>
    <subcellularLocation>
        <location evidence="1">Cytoplasm</location>
        <location evidence="1">Cytoskeleton</location>
        <location evidence="1">Spindle</location>
    </subcellularLocation>
    <subcellularLocation>
        <location evidence="1">Cytoplasm</location>
        <location evidence="1">Cytoskeleton</location>
        <location evidence="1">Spindle pole</location>
    </subcellularLocation>
    <text evidence="1">In interphase localizes in the cytoplasm, and during mitosis localizes to the spindle microtubules and spindle poles.</text>
</comment>
<comment type="similarity">
    <text evidence="2">Belongs to the RMDN family.</text>
</comment>
<sequence length="305" mass="35000">MALSSRLWRRLPPLRVCQQTRTWGSRGRCGAWGVRACEVIGNTRPFKRGFLFSALSYLGFETYQIISQAAVVHATAKVEEILAQADYLYESGETEKLYQLLIQYKESEDGELLWRLARASRDIAQLSKTSEEEKKVLVYEALDYAKRALEKKESSSAAHKWYAICISDVGDYEGIKVKIANAYVIKEHFEKAIELNPKDATSIHLMGIWCYTFAEMPWYQRRIAKVLFANPPSSTYEEALRYFHKAEEVDPNFYSKNLLLLGKTYLKLNNKKLAAFWLVKAKGYPAHTEEDKQIQTEAAQLLTGL</sequence>
<reference key="1">
    <citation type="journal article" date="2005" name="Science">
        <title>The transcriptional landscape of the mammalian genome.</title>
        <authorList>
            <person name="Carninci P."/>
            <person name="Kasukawa T."/>
            <person name="Katayama S."/>
            <person name="Gough J."/>
            <person name="Frith M.C."/>
            <person name="Maeda N."/>
            <person name="Oyama R."/>
            <person name="Ravasi T."/>
            <person name="Lenhard B."/>
            <person name="Wells C."/>
            <person name="Kodzius R."/>
            <person name="Shimokawa K."/>
            <person name="Bajic V.B."/>
            <person name="Brenner S.E."/>
            <person name="Batalov S."/>
            <person name="Forrest A.R."/>
            <person name="Zavolan M."/>
            <person name="Davis M.J."/>
            <person name="Wilming L.G."/>
            <person name="Aidinis V."/>
            <person name="Allen J.E."/>
            <person name="Ambesi-Impiombato A."/>
            <person name="Apweiler R."/>
            <person name="Aturaliya R.N."/>
            <person name="Bailey T.L."/>
            <person name="Bansal M."/>
            <person name="Baxter L."/>
            <person name="Beisel K.W."/>
            <person name="Bersano T."/>
            <person name="Bono H."/>
            <person name="Chalk A.M."/>
            <person name="Chiu K.P."/>
            <person name="Choudhary V."/>
            <person name="Christoffels A."/>
            <person name="Clutterbuck D.R."/>
            <person name="Crowe M.L."/>
            <person name="Dalla E."/>
            <person name="Dalrymple B.P."/>
            <person name="de Bono B."/>
            <person name="Della Gatta G."/>
            <person name="di Bernardo D."/>
            <person name="Down T."/>
            <person name="Engstrom P."/>
            <person name="Fagiolini M."/>
            <person name="Faulkner G."/>
            <person name="Fletcher C.F."/>
            <person name="Fukushima T."/>
            <person name="Furuno M."/>
            <person name="Futaki S."/>
            <person name="Gariboldi M."/>
            <person name="Georgii-Hemming P."/>
            <person name="Gingeras T.R."/>
            <person name="Gojobori T."/>
            <person name="Green R.E."/>
            <person name="Gustincich S."/>
            <person name="Harbers M."/>
            <person name="Hayashi Y."/>
            <person name="Hensch T.K."/>
            <person name="Hirokawa N."/>
            <person name="Hill D."/>
            <person name="Huminiecki L."/>
            <person name="Iacono M."/>
            <person name="Ikeo K."/>
            <person name="Iwama A."/>
            <person name="Ishikawa T."/>
            <person name="Jakt M."/>
            <person name="Kanapin A."/>
            <person name="Katoh M."/>
            <person name="Kawasawa Y."/>
            <person name="Kelso J."/>
            <person name="Kitamura H."/>
            <person name="Kitano H."/>
            <person name="Kollias G."/>
            <person name="Krishnan S.P."/>
            <person name="Kruger A."/>
            <person name="Kummerfeld S.K."/>
            <person name="Kurochkin I.V."/>
            <person name="Lareau L.F."/>
            <person name="Lazarevic D."/>
            <person name="Lipovich L."/>
            <person name="Liu J."/>
            <person name="Liuni S."/>
            <person name="McWilliam S."/>
            <person name="Madan Babu M."/>
            <person name="Madera M."/>
            <person name="Marchionni L."/>
            <person name="Matsuda H."/>
            <person name="Matsuzawa S."/>
            <person name="Miki H."/>
            <person name="Mignone F."/>
            <person name="Miyake S."/>
            <person name="Morris K."/>
            <person name="Mottagui-Tabar S."/>
            <person name="Mulder N."/>
            <person name="Nakano N."/>
            <person name="Nakauchi H."/>
            <person name="Ng P."/>
            <person name="Nilsson R."/>
            <person name="Nishiguchi S."/>
            <person name="Nishikawa S."/>
            <person name="Nori F."/>
            <person name="Ohara O."/>
            <person name="Okazaki Y."/>
            <person name="Orlando V."/>
            <person name="Pang K.C."/>
            <person name="Pavan W.J."/>
            <person name="Pavesi G."/>
            <person name="Pesole G."/>
            <person name="Petrovsky N."/>
            <person name="Piazza S."/>
            <person name="Reed J."/>
            <person name="Reid J.F."/>
            <person name="Ring B.Z."/>
            <person name="Ringwald M."/>
            <person name="Rost B."/>
            <person name="Ruan Y."/>
            <person name="Salzberg S.L."/>
            <person name="Sandelin A."/>
            <person name="Schneider C."/>
            <person name="Schoenbach C."/>
            <person name="Sekiguchi K."/>
            <person name="Semple C.A."/>
            <person name="Seno S."/>
            <person name="Sessa L."/>
            <person name="Sheng Y."/>
            <person name="Shibata Y."/>
            <person name="Shimada H."/>
            <person name="Shimada K."/>
            <person name="Silva D."/>
            <person name="Sinclair B."/>
            <person name="Sperling S."/>
            <person name="Stupka E."/>
            <person name="Sugiura K."/>
            <person name="Sultana R."/>
            <person name="Takenaka Y."/>
            <person name="Taki K."/>
            <person name="Tammoja K."/>
            <person name="Tan S.L."/>
            <person name="Tang S."/>
            <person name="Taylor M.S."/>
            <person name="Tegner J."/>
            <person name="Teichmann S.A."/>
            <person name="Ueda H.R."/>
            <person name="van Nimwegen E."/>
            <person name="Verardo R."/>
            <person name="Wei C.L."/>
            <person name="Yagi K."/>
            <person name="Yamanishi H."/>
            <person name="Zabarovsky E."/>
            <person name="Zhu S."/>
            <person name="Zimmer A."/>
            <person name="Hide W."/>
            <person name="Bult C."/>
            <person name="Grimmond S.M."/>
            <person name="Teasdale R.D."/>
            <person name="Liu E.T."/>
            <person name="Brusic V."/>
            <person name="Quackenbush J."/>
            <person name="Wahlestedt C."/>
            <person name="Mattick J.S."/>
            <person name="Hume D.A."/>
            <person name="Kai C."/>
            <person name="Sasaki D."/>
            <person name="Tomaru Y."/>
            <person name="Fukuda S."/>
            <person name="Kanamori-Katayama M."/>
            <person name="Suzuki M."/>
            <person name="Aoki J."/>
            <person name="Arakawa T."/>
            <person name="Iida J."/>
            <person name="Imamura K."/>
            <person name="Itoh M."/>
            <person name="Kato T."/>
            <person name="Kawaji H."/>
            <person name="Kawagashira N."/>
            <person name="Kawashima T."/>
            <person name="Kojima M."/>
            <person name="Kondo S."/>
            <person name="Konno H."/>
            <person name="Nakano K."/>
            <person name="Ninomiya N."/>
            <person name="Nishio T."/>
            <person name="Okada M."/>
            <person name="Plessy C."/>
            <person name="Shibata K."/>
            <person name="Shiraki T."/>
            <person name="Suzuki S."/>
            <person name="Tagami M."/>
            <person name="Waki K."/>
            <person name="Watahiki A."/>
            <person name="Okamura-Oho Y."/>
            <person name="Suzuki H."/>
            <person name="Kawai J."/>
            <person name="Hayashizaki Y."/>
        </authorList>
    </citation>
    <scope>NUCLEOTIDE SEQUENCE [LARGE SCALE MRNA]</scope>
    <source>
        <strain>C57BL/6J</strain>
        <tissue>Head</tissue>
        <tissue>Kidney</tissue>
    </source>
</reference>
<reference key="2">
    <citation type="journal article" date="2009" name="PLoS Biol.">
        <title>Lineage-specific biology revealed by a finished genome assembly of the mouse.</title>
        <authorList>
            <person name="Church D.M."/>
            <person name="Goodstadt L."/>
            <person name="Hillier L.W."/>
            <person name="Zody M.C."/>
            <person name="Goldstein S."/>
            <person name="She X."/>
            <person name="Bult C.J."/>
            <person name="Agarwala R."/>
            <person name="Cherry J.L."/>
            <person name="DiCuccio M."/>
            <person name="Hlavina W."/>
            <person name="Kapustin Y."/>
            <person name="Meric P."/>
            <person name="Maglott D."/>
            <person name="Birtle Z."/>
            <person name="Marques A.C."/>
            <person name="Graves T."/>
            <person name="Zhou S."/>
            <person name="Teague B."/>
            <person name="Potamousis K."/>
            <person name="Churas C."/>
            <person name="Place M."/>
            <person name="Herschleb J."/>
            <person name="Runnheim R."/>
            <person name="Forrest D."/>
            <person name="Amos-Landgraf J."/>
            <person name="Schwartz D.C."/>
            <person name="Cheng Z."/>
            <person name="Lindblad-Toh K."/>
            <person name="Eichler E.E."/>
            <person name="Ponting C.P."/>
        </authorList>
    </citation>
    <scope>NUCLEOTIDE SEQUENCE [LARGE SCALE GENOMIC DNA]</scope>
    <source>
        <strain>C57BL/6J</strain>
    </source>
</reference>
<reference key="3">
    <citation type="journal article" date="2004" name="Genome Res.">
        <title>The status, quality, and expansion of the NIH full-length cDNA project: the Mammalian Gene Collection (MGC).</title>
        <authorList>
            <consortium name="The MGC Project Team"/>
        </authorList>
    </citation>
    <scope>NUCLEOTIDE SEQUENCE [LARGE SCALE MRNA]</scope>
    <source>
        <strain>C57BL/6J</strain>
        <strain>FVB/N</strain>
        <tissue>Mammary gland</tissue>
        <tissue>Mammary tumor</tissue>
    </source>
</reference>
<reference key="4">
    <citation type="journal article" date="2007" name="J. Cell Biol.">
        <title>RMD-1, a novel microtubule-associated protein, functions in chromosome segregation in Caenorhabditis elegans.</title>
        <authorList>
            <person name="Oishi K."/>
            <person name="Okano H."/>
            <person name="Sawa H."/>
        </authorList>
    </citation>
    <scope>IDENTIFICATION</scope>
</reference>
<reference key="5">
    <citation type="journal article" date="2010" name="Cell">
        <title>A tissue-specific atlas of mouse protein phosphorylation and expression.</title>
        <authorList>
            <person name="Huttlin E.L."/>
            <person name="Jedrychowski M.P."/>
            <person name="Elias J.E."/>
            <person name="Goswami T."/>
            <person name="Rad R."/>
            <person name="Beausoleil S.A."/>
            <person name="Villen J."/>
            <person name="Haas W."/>
            <person name="Sowa M.E."/>
            <person name="Gygi S.P."/>
        </authorList>
    </citation>
    <scope>IDENTIFICATION BY MASS SPECTROMETRY [LARGE SCALE ANALYSIS]</scope>
    <source>
        <tissue>Brain</tissue>
        <tissue>Brown adipose tissue</tissue>
        <tissue>Heart</tissue>
        <tissue>Kidney</tissue>
        <tissue>Liver</tissue>
        <tissue>Lung</tissue>
        <tissue>Pancreas</tissue>
        <tissue>Spleen</tissue>
        <tissue>Testis</tissue>
    </source>
</reference>
<reference key="6">
    <citation type="journal article" date="2013" name="Mol. Cell">
        <title>SIRT5-mediated lysine desuccinylation impacts diverse metabolic pathways.</title>
        <authorList>
            <person name="Park J."/>
            <person name="Chen Y."/>
            <person name="Tishkoff D.X."/>
            <person name="Peng C."/>
            <person name="Tan M."/>
            <person name="Dai L."/>
            <person name="Xie Z."/>
            <person name="Zhang Y."/>
            <person name="Zwaans B.M."/>
            <person name="Skinner M.E."/>
            <person name="Lombard D.B."/>
            <person name="Zhao Y."/>
        </authorList>
    </citation>
    <scope>SUCCINYLATION [LARGE SCALE ANALYSIS] AT LYS-160 AND LYS-245</scope>
    <scope>IDENTIFICATION BY MASS SPECTROMETRY [LARGE SCALE ANALYSIS]</scope>
    <source>
        <tissue>Liver</tissue>
    </source>
</reference>
<keyword id="KW-0963">Cytoplasm</keyword>
<keyword id="KW-0206">Cytoskeleton</keyword>
<keyword id="KW-0493">Microtubule</keyword>
<keyword id="KW-1185">Reference proteome</keyword>
<keyword id="KW-0677">Repeat</keyword>
<keyword id="KW-0802">TPR repeat</keyword>
<feature type="chain" id="PRO_0000187183" description="Regulator of microtubule dynamics protein 1">
    <location>
        <begin position="1"/>
        <end position="305"/>
    </location>
</feature>
<feature type="repeat" description="TPR 1">
    <location>
        <begin position="163"/>
        <end position="199"/>
    </location>
</feature>
<feature type="repeat" description="TPR 2">
    <location>
        <begin position="217"/>
        <end position="253"/>
    </location>
</feature>
<feature type="modified residue" description="N6-succinyllysine" evidence="3">
    <location>
        <position position="160"/>
    </location>
</feature>
<feature type="modified residue" description="N6-succinyllysine" evidence="3">
    <location>
        <position position="245"/>
    </location>
</feature>
<feature type="sequence conflict" description="In Ref. 2; AAH25158/AAH96046." evidence="2" ref="2">
    <original>G</original>
    <variation>S</variation>
    <location>
        <position position="24"/>
    </location>
</feature>
<feature type="sequence conflict" description="In Ref. 1; BAB26924." evidence="2" ref="1">
    <original>A</original>
    <variation>R</variation>
    <location>
        <position position="31"/>
    </location>
</feature>
<feature type="sequence conflict" description="In Ref. 1; BAB22104." evidence="2" ref="1">
    <original>W</original>
    <variation>R</variation>
    <location>
        <position position="32"/>
    </location>
</feature>
<feature type="sequence conflict" description="In Ref. 1; BAB22104." evidence="2" ref="1">
    <original>K</original>
    <variation>R</variation>
    <location>
        <position position="282"/>
    </location>
</feature>
<gene>
    <name type="primary">Rmdn1</name>
    <name type="synonym">Fam82b</name>
</gene>
<protein>
    <recommendedName>
        <fullName>Regulator of microtubule dynamics protein 1</fullName>
        <shortName>RMD-1</shortName>
        <shortName>mRMD-1</shortName>
    </recommendedName>
    <alternativeName>
        <fullName>Microtubule-associated protein</fullName>
    </alternativeName>
    <alternativeName>
        <fullName>Protein FAM82B</fullName>
    </alternativeName>
</protein>
<accession>Q9DCV4</accession>
<accession>A2AGJ3</accession>
<accession>A9UN01</accession>
<accession>Q8C0Y9</accession>
<accession>Q8R166</accession>
<accession>Q9CWS6</accession>
<organism>
    <name type="scientific">Mus musculus</name>
    <name type="common">Mouse</name>
    <dbReference type="NCBI Taxonomy" id="10090"/>
    <lineage>
        <taxon>Eukaryota</taxon>
        <taxon>Metazoa</taxon>
        <taxon>Chordata</taxon>
        <taxon>Craniata</taxon>
        <taxon>Vertebrata</taxon>
        <taxon>Euteleostomi</taxon>
        <taxon>Mammalia</taxon>
        <taxon>Eutheria</taxon>
        <taxon>Euarchontoglires</taxon>
        <taxon>Glires</taxon>
        <taxon>Rodentia</taxon>
        <taxon>Myomorpha</taxon>
        <taxon>Muroidea</taxon>
        <taxon>Muridae</taxon>
        <taxon>Murinae</taxon>
        <taxon>Mus</taxon>
        <taxon>Mus</taxon>
    </lineage>
</organism>
<name>RMD1_MOUSE</name>
<proteinExistence type="evidence at protein level"/>